<evidence type="ECO:0000255" key="1">
    <source>
        <dbReference type="HAMAP-Rule" id="MF_00764"/>
    </source>
</evidence>
<gene>
    <name type="ordered locus">plu4501</name>
</gene>
<organism>
    <name type="scientific">Photorhabdus laumondii subsp. laumondii (strain DSM 15139 / CIP 105565 / TT01)</name>
    <name type="common">Photorhabdus luminescens subsp. laumondii</name>
    <dbReference type="NCBI Taxonomy" id="243265"/>
    <lineage>
        <taxon>Bacteria</taxon>
        <taxon>Pseudomonadati</taxon>
        <taxon>Pseudomonadota</taxon>
        <taxon>Gammaproteobacteria</taxon>
        <taxon>Enterobacterales</taxon>
        <taxon>Morganellaceae</taxon>
        <taxon>Photorhabdus</taxon>
    </lineage>
</organism>
<protein>
    <recommendedName>
        <fullName evidence="1">UPF0306 protein plu4501</fullName>
    </recommendedName>
</protein>
<sequence length="143" mass="16573">MNATENFQIIHRYLARQHVLTLCTATGDDVWCANCFYVFNADEIAFWFMTELHTRHGEMMQVNPQVAGTIAGQIRHIAQIKGIQFKGEVIRLEGEKDKVARARYCRRFPVSIAVKTPIWQLNLNEIKMTDNTLGFGKKICWQR</sequence>
<comment type="similarity">
    <text evidence="1">Belongs to the UPF0306 family.</text>
</comment>
<feature type="chain" id="PRO_0000214871" description="UPF0306 protein plu4501">
    <location>
        <begin position="1"/>
        <end position="143"/>
    </location>
</feature>
<keyword id="KW-1185">Reference proteome</keyword>
<name>Y4501_PHOLL</name>
<proteinExistence type="inferred from homology"/>
<accession>Q7MZ10</accession>
<dbReference type="EMBL" id="BX571874">
    <property type="protein sequence ID" value="CAE16873.1"/>
    <property type="molecule type" value="Genomic_DNA"/>
</dbReference>
<dbReference type="RefSeq" id="WP_011148581.1">
    <property type="nucleotide sequence ID" value="NC_005126.1"/>
</dbReference>
<dbReference type="SMR" id="Q7MZ10"/>
<dbReference type="STRING" id="243265.plu4501"/>
<dbReference type="GeneID" id="48850709"/>
<dbReference type="KEGG" id="plu:plu4501"/>
<dbReference type="eggNOG" id="COG3787">
    <property type="taxonomic scope" value="Bacteria"/>
</dbReference>
<dbReference type="HOGENOM" id="CLU_105087_3_0_6"/>
<dbReference type="OrthoDB" id="8447155at2"/>
<dbReference type="Proteomes" id="UP000002514">
    <property type="component" value="Chromosome"/>
</dbReference>
<dbReference type="Gene3D" id="2.30.110.10">
    <property type="entry name" value="Electron Transport, Fmn-binding Protein, Chain A"/>
    <property type="match status" value="1"/>
</dbReference>
<dbReference type="HAMAP" id="MF_00764">
    <property type="entry name" value="UPF0306"/>
    <property type="match status" value="1"/>
</dbReference>
<dbReference type="InterPro" id="IPR012349">
    <property type="entry name" value="Split_barrel_FMN-bd"/>
</dbReference>
<dbReference type="InterPro" id="IPR011194">
    <property type="entry name" value="UPF0306"/>
</dbReference>
<dbReference type="NCBIfam" id="NF002900">
    <property type="entry name" value="PRK03467.1"/>
    <property type="match status" value="1"/>
</dbReference>
<dbReference type="PIRSF" id="PIRSF009554">
    <property type="entry name" value="UCP009554"/>
    <property type="match status" value="1"/>
</dbReference>
<dbReference type="SUPFAM" id="SSF50475">
    <property type="entry name" value="FMN-binding split barrel"/>
    <property type="match status" value="1"/>
</dbReference>
<reference key="1">
    <citation type="journal article" date="2003" name="Nat. Biotechnol.">
        <title>The genome sequence of the entomopathogenic bacterium Photorhabdus luminescens.</title>
        <authorList>
            <person name="Duchaud E."/>
            <person name="Rusniok C."/>
            <person name="Frangeul L."/>
            <person name="Buchrieser C."/>
            <person name="Givaudan A."/>
            <person name="Taourit S."/>
            <person name="Bocs S."/>
            <person name="Boursaux-Eude C."/>
            <person name="Chandler M."/>
            <person name="Charles J.-F."/>
            <person name="Dassa E."/>
            <person name="Derose R."/>
            <person name="Derzelle S."/>
            <person name="Freyssinet G."/>
            <person name="Gaudriault S."/>
            <person name="Medigue C."/>
            <person name="Lanois A."/>
            <person name="Powell K."/>
            <person name="Siguier P."/>
            <person name="Vincent R."/>
            <person name="Wingate V."/>
            <person name="Zouine M."/>
            <person name="Glaser P."/>
            <person name="Boemare N."/>
            <person name="Danchin A."/>
            <person name="Kunst F."/>
        </authorList>
    </citation>
    <scope>NUCLEOTIDE SEQUENCE [LARGE SCALE GENOMIC DNA]</scope>
    <source>
        <strain>DSM 15139 / CIP 105565 / TT01</strain>
    </source>
</reference>